<keyword id="KW-0045">Antibiotic biosynthesis</keyword>
<keyword id="KW-0274">FAD</keyword>
<keyword id="KW-0285">Flavoprotein</keyword>
<keyword id="KW-0520">NAD</keyword>
<keyword id="KW-0521">NADP</keyword>
<keyword id="KW-0547">Nucleotide-binding</keyword>
<keyword id="KW-0560">Oxidoreductase</keyword>
<protein>
    <recommendedName>
        <fullName>Aklavinone 12-hydroxylase DnrF</fullName>
        <ecNumber>1.14.13.180</ecNumber>
    </recommendedName>
    <alternativeName>
        <fullName>Aklavinone 11-hydroxylase</fullName>
    </alternativeName>
</protein>
<reference key="1">
    <citation type="journal article" date="1994" name="J. Bacteriol.">
        <title>Molecular cloning and characterization of the aklavinone 11-hydroxylase gene of Streptomyces peucetius subsp. caesius ATCC 27952.</title>
        <authorList>
            <person name="Hong Y.S."/>
            <person name="Hwang C.K."/>
            <person name="Hong S.K."/>
            <person name="Kim Y.H."/>
            <person name="Lee J.J."/>
        </authorList>
    </citation>
    <scope>NUCLEOTIDE SEQUENCE [GENOMIC DNA]</scope>
    <scope>FUNCTION</scope>
    <scope>CATALYTIC ACTIVITY</scope>
    <scope>DISRUPTION PHENOTYPE</scope>
    <source>
        <strain>ATCC 27952 / DSM 41231 / NBRC 14660 / 106FI</strain>
    </source>
</reference>
<sequence>MALTKPDVDVLVVGGGLGGLSTALFLARRGARVLLVERHASTSVLPKAAGQNPRTMELFRFGGVADEILATDDIRGAQGDFTIKVVERVGGRVPAQLRESFEELVGATEQCTPMPWALAPQDRVEPVLVAHAAKHGAEIRFATELTSFQAGDDGVTARLRDLGTGAESTVSARYLVAADGPRSAIRESLGITRHGHGTLAHFMGVIFEADLTAVVPPGSTGWYYLQHPDFTGTFGPTDRPNRHTFYVRYDPERGERPEDYTPQRCTELIRLAVDAPGLVPDILDIQAWDMAAYIADRWREGPVLLVGDAAKVTPPTGGMGGNTAIGHGFDVAWKLAAVLRGEAGERLLDSYGADGSLVSRLVVDESLAIYAQRMAPHLLGSVPEERGTAQVVLGFRYRSTAVAAEDDDPEPTEDPRRPSGRPGFRAPHVWIEQDGTRRSTVELFGDCWVLLAAPEGGAWGQAAARAARIWASASTSISSAAMSPPPPAN</sequence>
<gene>
    <name type="primary">dnrF</name>
</gene>
<evidence type="ECO:0000250" key="1"/>
<evidence type="ECO:0000256" key="2">
    <source>
        <dbReference type="SAM" id="MobiDB-lite"/>
    </source>
</evidence>
<evidence type="ECO:0000269" key="3">
    <source>
    </source>
</evidence>
<evidence type="ECO:0000305" key="4"/>
<evidence type="ECO:0000305" key="5">
    <source>
    </source>
</evidence>
<name>DNRF_STRC0</name>
<feature type="chain" id="PRO_0000425677" description="Aklavinone 12-hydroxylase DnrF">
    <location>
        <begin position="1"/>
        <end position="489"/>
    </location>
</feature>
<feature type="region of interest" description="Disordered" evidence="2">
    <location>
        <begin position="402"/>
        <end position="428"/>
    </location>
</feature>
<feature type="active site" description="Proton acceptor" evidence="1">
    <location>
        <position position="224"/>
    </location>
</feature>
<feature type="binding site" evidence="1">
    <location>
        <begin position="17"/>
        <end position="18"/>
    </location>
    <ligand>
        <name>FAD</name>
        <dbReference type="ChEBI" id="CHEBI:57692"/>
    </ligand>
</feature>
<feature type="binding site" evidence="1">
    <location>
        <position position="37"/>
    </location>
    <ligand>
        <name>FAD</name>
        <dbReference type="ChEBI" id="CHEBI:57692"/>
    </ligand>
</feature>
<feature type="binding site" evidence="1">
    <location>
        <position position="121"/>
    </location>
    <ligand>
        <name>FAD</name>
        <dbReference type="ChEBI" id="CHEBI:57692"/>
    </ligand>
</feature>
<feature type="binding site" evidence="1">
    <location>
        <position position="145"/>
    </location>
    <ligand>
        <name>FAD</name>
        <dbReference type="ChEBI" id="CHEBI:57692"/>
    </ligand>
</feature>
<feature type="binding site" evidence="1">
    <location>
        <position position="308"/>
    </location>
    <ligand>
        <name>FAD</name>
        <dbReference type="ChEBI" id="CHEBI:57692"/>
    </ligand>
</feature>
<feature type="binding site" evidence="1">
    <location>
        <position position="317"/>
    </location>
    <ligand>
        <name>aklavinone</name>
        <dbReference type="ChEBI" id="CHEBI:31181"/>
    </ligand>
</feature>
<organism>
    <name type="scientific">Streptomyces peucetius subsp. caesius</name>
    <dbReference type="NCBI Taxonomy" id="55158"/>
    <lineage>
        <taxon>Bacteria</taxon>
        <taxon>Bacillati</taxon>
        <taxon>Actinomycetota</taxon>
        <taxon>Actinomycetes</taxon>
        <taxon>Kitasatosporales</taxon>
        <taxon>Streptomycetaceae</taxon>
        <taxon>Streptomyces</taxon>
    </lineage>
</organism>
<comment type="function">
    <text evidence="3">Involved in the biosynthesis of the anthracyclines carminomycin, rhodomycin, daunorubicin (daunomycin) and doxorubicin (adriamycin) which are aromatic polyketide antibiotics that exhibit high cytotoxicity and are widely applied in the chemotherapy of a variety of cancers. Catalyzes the incorporation of a hydroxyl group at position C-11 of aklavinone, resulting in epsilon-rhodomycinone.</text>
</comment>
<comment type="catalytic activity">
    <reaction evidence="3">
        <text>aklavinone + NADPH + O2 + H(+) = epsilon-rhodomycinone + NADP(+) + H2O</text>
        <dbReference type="Rhea" id="RHEA:37835"/>
        <dbReference type="ChEBI" id="CHEBI:15377"/>
        <dbReference type="ChEBI" id="CHEBI:15378"/>
        <dbReference type="ChEBI" id="CHEBI:15379"/>
        <dbReference type="ChEBI" id="CHEBI:31181"/>
        <dbReference type="ChEBI" id="CHEBI:57783"/>
        <dbReference type="ChEBI" id="CHEBI:58349"/>
        <dbReference type="ChEBI" id="CHEBI:75291"/>
        <dbReference type="EC" id="1.14.13.180"/>
    </reaction>
</comment>
<comment type="cofactor">
    <cofactor evidence="1">
        <name>FAD</name>
        <dbReference type="ChEBI" id="CHEBI:57692"/>
    </cofactor>
</comment>
<comment type="pathway">
    <text>Antibiotic biosynthesis; daunorubicin biosynthesis.</text>
</comment>
<comment type="pathway">
    <text>Antibiotic biosynthesis; carminomycin biosynthesis.</text>
</comment>
<comment type="pathway">
    <text>Antibiotic biosynthesis; rhodomycin biosynthesis.</text>
</comment>
<comment type="pathway">
    <text>Antibiotic biosynthesis; doxorubicin biosynthesis.</text>
</comment>
<comment type="subunit">
    <text evidence="1">Monomer.</text>
</comment>
<comment type="disruption phenotype">
    <text evidence="3">Cells lacking this gene do not produce epsilon-rhodomycinone and accumulate 11-deoxycarminomycin and 11-deoxydaunorubicin.</text>
</comment>
<comment type="miscellaneous">
    <text evidence="5">S.peucetius subsp. caesius ATCC 27952, a mutant strain derived from S.peucetius ATCC 29050, is the only organism reported to produce doxorubicin in vivo (PubMed:7961477).</text>
</comment>
<comment type="similarity">
    <text evidence="4">Belongs to the PheA/TfdB FAD monooxygenase family.</text>
</comment>
<accession>P72495</accession>
<dbReference type="EC" id="1.14.13.180"/>
<dbReference type="EMBL" id="U09844">
    <property type="protein sequence ID" value="AAA62496.1"/>
    <property type="molecule type" value="Genomic_DNA"/>
</dbReference>
<dbReference type="SMR" id="P72495"/>
<dbReference type="BioCyc" id="MetaCyc:MONOMER-18175"/>
<dbReference type="BRENDA" id="1.14.13.180">
    <property type="organism ID" value="6073"/>
</dbReference>
<dbReference type="UniPathway" id="UPA00054"/>
<dbReference type="UniPathway" id="UPA01040"/>
<dbReference type="UniPathway" id="UPA01041"/>
<dbReference type="UniPathway" id="UPA01042"/>
<dbReference type="GO" id="GO:0071949">
    <property type="term" value="F:FAD binding"/>
    <property type="evidence" value="ECO:0000250"/>
    <property type="project" value="UniProtKB"/>
</dbReference>
<dbReference type="GO" id="GO:0016709">
    <property type="term" value="F:oxidoreductase activity, acting on paired donors, with incorporation or reduction of molecular oxygen, NAD(P)H as one donor, and incorporation of one atom of oxygen"/>
    <property type="evidence" value="ECO:0000314"/>
    <property type="project" value="UniProtKB"/>
</dbReference>
<dbReference type="GO" id="GO:1901771">
    <property type="term" value="P:daunorubicin biosynthetic process"/>
    <property type="evidence" value="ECO:0000314"/>
    <property type="project" value="UniProtKB"/>
</dbReference>
<dbReference type="GO" id="GO:0044598">
    <property type="term" value="P:doxorubicin metabolic process"/>
    <property type="evidence" value="ECO:0000314"/>
    <property type="project" value="UniProtKB"/>
</dbReference>
<dbReference type="Gene3D" id="3.40.30.120">
    <property type="match status" value="1"/>
</dbReference>
<dbReference type="Gene3D" id="3.30.9.10">
    <property type="entry name" value="D-Amino Acid Oxidase, subunit A, domain 2"/>
    <property type="match status" value="1"/>
</dbReference>
<dbReference type="Gene3D" id="3.50.50.60">
    <property type="entry name" value="FAD/NAD(P)-binding domain"/>
    <property type="match status" value="1"/>
</dbReference>
<dbReference type="InterPro" id="IPR002938">
    <property type="entry name" value="FAD-bd"/>
</dbReference>
<dbReference type="InterPro" id="IPR036188">
    <property type="entry name" value="FAD/NAD-bd_sf"/>
</dbReference>
<dbReference type="InterPro" id="IPR050641">
    <property type="entry name" value="RIFMO-like"/>
</dbReference>
<dbReference type="NCBIfam" id="NF046068">
    <property type="entry name" value="AkvoneHdxseDnrF"/>
    <property type="match status" value="1"/>
</dbReference>
<dbReference type="NCBIfam" id="NF046069">
    <property type="entry name" value="AkvoneHdxseRdmE"/>
    <property type="match status" value="1"/>
</dbReference>
<dbReference type="PANTHER" id="PTHR43004:SF19">
    <property type="entry name" value="BINDING MONOOXYGENASE, PUTATIVE (JCVI)-RELATED"/>
    <property type="match status" value="1"/>
</dbReference>
<dbReference type="PANTHER" id="PTHR43004">
    <property type="entry name" value="TRK SYSTEM POTASSIUM UPTAKE PROTEIN"/>
    <property type="match status" value="1"/>
</dbReference>
<dbReference type="Pfam" id="PF01494">
    <property type="entry name" value="FAD_binding_3"/>
    <property type="match status" value="1"/>
</dbReference>
<dbReference type="PRINTS" id="PR00420">
    <property type="entry name" value="RNGMNOXGNASE"/>
</dbReference>
<dbReference type="SUPFAM" id="SSF51905">
    <property type="entry name" value="FAD/NAD(P)-binding domain"/>
    <property type="match status" value="1"/>
</dbReference>
<proteinExistence type="evidence at protein level"/>